<comment type="function">
    <text>Part of the multicomponent 3-phenylpropionate dioxygenase, that converts 3-phenylpropionic acid (PP) and cinnamic acid (CI) into 3-phenylpropionate-dihydrodiol (PP-dihydrodiol) and cinnamic acid-dihydrodiol (CI-dihydrodiol), respectively. This protein seems to be a 2Fe-2S ferredoxin.</text>
</comment>
<comment type="pathway">
    <text>Aromatic compound metabolism; 3-phenylpropanoate degradation.</text>
</comment>
<comment type="subunit">
    <text>This dioxygenase system consists of four proteins: the two subunits of the hydroxylase component (HcaE and HcaF), a ferredoxin (HcaC) and a ferredoxin reductase (HcaD).</text>
</comment>
<comment type="similarity">
    <text evidence="2">Belongs to the bacterial ring-hydroxylating dioxygenase ferredoxin component family.</text>
</comment>
<reference key="1">
    <citation type="journal article" date="1998" name="J. Bacteriol.">
        <title>Characterization of the hca cluster encoding the dioxygenolytic pathway for initial catabolism of 3-phenylpropionic acid in Escherichia coli K-12.</title>
        <authorList>
            <person name="Diaz E."/>
            <person name="Ferrandez A."/>
            <person name="Garcia J.L."/>
        </authorList>
    </citation>
    <scope>NUCLEOTIDE SEQUENCE [GENOMIC DNA]</scope>
    <scope>CHARACTERIZATION</scope>
    <source>
        <strain>K12 / MC1061 / ATCC 53338 / DSM 7140</strain>
    </source>
</reference>
<reference key="2">
    <citation type="journal article" date="1997" name="DNA Res.">
        <title>Construction of a contiguous 874-kb sequence of the Escherichia coli-K12 genome corresponding to 50.0-68.8 min on the linkage map and analysis of its sequence features.</title>
        <authorList>
            <person name="Yamamoto Y."/>
            <person name="Aiba H."/>
            <person name="Baba T."/>
            <person name="Hayashi K."/>
            <person name="Inada T."/>
            <person name="Isono K."/>
            <person name="Itoh T."/>
            <person name="Kimura S."/>
            <person name="Kitagawa M."/>
            <person name="Makino K."/>
            <person name="Miki T."/>
            <person name="Mitsuhashi N."/>
            <person name="Mizobuchi K."/>
            <person name="Mori H."/>
            <person name="Nakade S."/>
            <person name="Nakamura Y."/>
            <person name="Nashimoto H."/>
            <person name="Oshima T."/>
            <person name="Oyama S."/>
            <person name="Saito N."/>
            <person name="Sampei G."/>
            <person name="Satoh Y."/>
            <person name="Sivasundaram S."/>
            <person name="Tagami H."/>
            <person name="Takahashi H."/>
            <person name="Takeda J."/>
            <person name="Takemoto K."/>
            <person name="Uehara K."/>
            <person name="Wada C."/>
            <person name="Yamagata S."/>
            <person name="Horiuchi T."/>
        </authorList>
    </citation>
    <scope>NUCLEOTIDE SEQUENCE [LARGE SCALE GENOMIC DNA]</scope>
    <source>
        <strain>K12 / W3110 / ATCC 27325 / DSM 5911</strain>
    </source>
</reference>
<reference key="3">
    <citation type="journal article" date="1997" name="Science">
        <title>The complete genome sequence of Escherichia coli K-12.</title>
        <authorList>
            <person name="Blattner F.R."/>
            <person name="Plunkett G. III"/>
            <person name="Bloch C.A."/>
            <person name="Perna N.T."/>
            <person name="Burland V."/>
            <person name="Riley M."/>
            <person name="Collado-Vides J."/>
            <person name="Glasner J.D."/>
            <person name="Rode C.K."/>
            <person name="Mayhew G.F."/>
            <person name="Gregor J."/>
            <person name="Davis N.W."/>
            <person name="Kirkpatrick H.A."/>
            <person name="Goeden M.A."/>
            <person name="Rose D.J."/>
            <person name="Mau B."/>
            <person name="Shao Y."/>
        </authorList>
    </citation>
    <scope>NUCLEOTIDE SEQUENCE [LARGE SCALE GENOMIC DNA]</scope>
    <source>
        <strain>K12 / MG1655 / ATCC 47076</strain>
    </source>
</reference>
<reference key="4">
    <citation type="journal article" date="2006" name="Mol. Syst. Biol.">
        <title>Highly accurate genome sequences of Escherichia coli K-12 strains MG1655 and W3110.</title>
        <authorList>
            <person name="Hayashi K."/>
            <person name="Morooka N."/>
            <person name="Yamamoto Y."/>
            <person name="Fujita K."/>
            <person name="Isono K."/>
            <person name="Choi S."/>
            <person name="Ohtsubo E."/>
            <person name="Baba T."/>
            <person name="Wanner B.L."/>
            <person name="Mori H."/>
            <person name="Horiuchi T."/>
        </authorList>
    </citation>
    <scope>NUCLEOTIDE SEQUENCE [LARGE SCALE GENOMIC DNA]</scope>
    <source>
        <strain>K12 / W3110 / ATCC 27325 / DSM 5911</strain>
    </source>
</reference>
<accession>P0ABW0</accession>
<accession>O08099</accession>
<accession>P77266</accession>
<keyword id="KW-0001">2Fe-2S</keyword>
<keyword id="KW-0058">Aromatic hydrocarbons catabolism</keyword>
<keyword id="KW-0249">Electron transport</keyword>
<keyword id="KW-0408">Iron</keyword>
<keyword id="KW-0411">Iron-sulfur</keyword>
<keyword id="KW-0479">Metal-binding</keyword>
<keyword id="KW-1185">Reference proteome</keyword>
<keyword id="KW-0813">Transport</keyword>
<dbReference type="EMBL" id="Y11070">
    <property type="protein sequence ID" value="CAA71950.1"/>
    <property type="molecule type" value="Genomic_DNA"/>
</dbReference>
<dbReference type="EMBL" id="U00096">
    <property type="protein sequence ID" value="AAC75593.1"/>
    <property type="molecule type" value="Genomic_DNA"/>
</dbReference>
<dbReference type="EMBL" id="AP009048">
    <property type="protein sequence ID" value="BAA16443.1"/>
    <property type="molecule type" value="Genomic_DNA"/>
</dbReference>
<dbReference type="PIR" id="C65031">
    <property type="entry name" value="C65031"/>
</dbReference>
<dbReference type="RefSeq" id="NP_417035.1">
    <property type="nucleotide sequence ID" value="NC_000913.3"/>
</dbReference>
<dbReference type="RefSeq" id="WP_001080102.1">
    <property type="nucleotide sequence ID" value="NZ_STEB01000011.1"/>
</dbReference>
<dbReference type="SMR" id="P0ABW0"/>
<dbReference type="BioGRID" id="4261575">
    <property type="interactions" value="16"/>
</dbReference>
<dbReference type="ComplexPortal" id="CPX-5161">
    <property type="entry name" value="3-phenylpropionate/cinnamic acid dioxygenase"/>
</dbReference>
<dbReference type="FunCoup" id="P0ABW0">
    <property type="interactions" value="159"/>
</dbReference>
<dbReference type="IntAct" id="P0ABW0">
    <property type="interactions" value="4"/>
</dbReference>
<dbReference type="STRING" id="511145.b2540"/>
<dbReference type="PaxDb" id="511145-b2540"/>
<dbReference type="EnsemblBacteria" id="AAC75593">
    <property type="protein sequence ID" value="AAC75593"/>
    <property type="gene ID" value="b2540"/>
</dbReference>
<dbReference type="GeneID" id="947015"/>
<dbReference type="KEGG" id="ecj:JW2524"/>
<dbReference type="KEGG" id="eco:b2540"/>
<dbReference type="KEGG" id="ecoc:C3026_14070"/>
<dbReference type="PATRIC" id="fig|1411691.4.peg.4194"/>
<dbReference type="EchoBASE" id="EB3231"/>
<dbReference type="eggNOG" id="COG2146">
    <property type="taxonomic scope" value="Bacteria"/>
</dbReference>
<dbReference type="HOGENOM" id="CLU_055690_5_2_6"/>
<dbReference type="InParanoid" id="P0ABW0"/>
<dbReference type="OMA" id="TLECWLH"/>
<dbReference type="OrthoDB" id="9800167at2"/>
<dbReference type="PhylomeDB" id="P0ABW0"/>
<dbReference type="BioCyc" id="EcoCyc:HCAC-MONOMER"/>
<dbReference type="BioCyc" id="MetaCyc:HCAC-MONOMER"/>
<dbReference type="BRENDA" id="3.7.1.14">
    <property type="organism ID" value="2026"/>
</dbReference>
<dbReference type="UniPathway" id="UPA00714"/>
<dbReference type="PRO" id="PR:P0ABW0"/>
<dbReference type="Proteomes" id="UP000000625">
    <property type="component" value="Chromosome"/>
</dbReference>
<dbReference type="GO" id="GO:0009334">
    <property type="term" value="C:3-phenylpropionate dioxygenase complex"/>
    <property type="evidence" value="ECO:0000303"/>
    <property type="project" value="ComplexPortal"/>
</dbReference>
<dbReference type="GO" id="GO:0051537">
    <property type="term" value="F:2 iron, 2 sulfur cluster binding"/>
    <property type="evidence" value="ECO:0000314"/>
    <property type="project" value="EcoCyc"/>
</dbReference>
<dbReference type="GO" id="GO:0008695">
    <property type="term" value="F:3-phenylpropionate dioxygenase activity"/>
    <property type="evidence" value="ECO:0007669"/>
    <property type="project" value="UniProtKB-UniRule"/>
</dbReference>
<dbReference type="GO" id="GO:0051536">
    <property type="term" value="F:iron-sulfur cluster binding"/>
    <property type="evidence" value="ECO:0000314"/>
    <property type="project" value="EcoliWiki"/>
</dbReference>
<dbReference type="GO" id="GO:0046872">
    <property type="term" value="F:metal ion binding"/>
    <property type="evidence" value="ECO:0007669"/>
    <property type="project" value="UniProtKB-KW"/>
</dbReference>
<dbReference type="GO" id="GO:0019380">
    <property type="term" value="P:3-phenylpropionate catabolic process"/>
    <property type="evidence" value="ECO:0000315"/>
    <property type="project" value="EcoCyc"/>
</dbReference>
<dbReference type="CDD" id="cd03528">
    <property type="entry name" value="Rieske_RO_ferredoxin"/>
    <property type="match status" value="1"/>
</dbReference>
<dbReference type="FunFam" id="2.102.10.10:FF:000005">
    <property type="entry name" value="3-phenylpropionate/cinnamic acid dioxygenase ferredoxin subunit"/>
    <property type="match status" value="1"/>
</dbReference>
<dbReference type="Gene3D" id="2.102.10.10">
    <property type="entry name" value="Rieske [2Fe-2S] iron-sulphur domain"/>
    <property type="match status" value="1"/>
</dbReference>
<dbReference type="HAMAP" id="MF_01650">
    <property type="entry name" value="HcaC"/>
    <property type="match status" value="1"/>
</dbReference>
<dbReference type="InterPro" id="IPR023739">
    <property type="entry name" value="HcaC"/>
</dbReference>
<dbReference type="InterPro" id="IPR017941">
    <property type="entry name" value="Rieske_2Fe-2S"/>
</dbReference>
<dbReference type="InterPro" id="IPR036922">
    <property type="entry name" value="Rieske_2Fe-2S_sf"/>
</dbReference>
<dbReference type="InterPro" id="IPR053387">
    <property type="entry name" value="Ring-hydroxylating_fd"/>
</dbReference>
<dbReference type="NCBIfam" id="NF042948">
    <property type="entry name" value="3PPDioc_HcaC"/>
    <property type="match status" value="1"/>
</dbReference>
<dbReference type="NCBIfam" id="NF007422">
    <property type="entry name" value="PRK09965.1"/>
    <property type="match status" value="1"/>
</dbReference>
<dbReference type="PANTHER" id="PTHR21496:SF23">
    <property type="entry name" value="3-PHENYLPROPIONATE_CINNAMIC ACID DIOXYGENASE FERREDOXIN SUBUNIT"/>
    <property type="match status" value="1"/>
</dbReference>
<dbReference type="PANTHER" id="PTHR21496">
    <property type="entry name" value="FERREDOXIN-RELATED"/>
    <property type="match status" value="1"/>
</dbReference>
<dbReference type="Pfam" id="PF00355">
    <property type="entry name" value="Rieske"/>
    <property type="match status" value="1"/>
</dbReference>
<dbReference type="SUPFAM" id="SSF50022">
    <property type="entry name" value="ISP domain"/>
    <property type="match status" value="1"/>
</dbReference>
<dbReference type="PROSITE" id="PS51296">
    <property type="entry name" value="RIESKE"/>
    <property type="match status" value="1"/>
</dbReference>
<sequence>MNRIYACPVADVPEGEALRIDTSPVIALFNVGGEFYAINDRCSHGNASMSEGYLEDDATVECPLHAASFCLKTGKALCLPATDPLTTYPVHVEGGDIFIDLPEAQP</sequence>
<name>HCAC_ECOLI</name>
<evidence type="ECO:0000255" key="1"/>
<evidence type="ECO:0000305" key="2"/>
<proteinExistence type="evidence at protein level"/>
<gene>
    <name type="primary">hcaC</name>
    <name type="synonym">hcaA3</name>
    <name type="synonym">phdB</name>
    <name type="synonym">yfhW</name>
    <name type="ordered locus">b2540</name>
    <name type="ordered locus">JW2524</name>
</gene>
<feature type="chain" id="PRO_0000201688" description="3-phenylpropionate/cinnamic acid dioxygenase ferredoxin subunit">
    <location>
        <begin position="1"/>
        <end position="106"/>
    </location>
</feature>
<feature type="domain" description="Rieske">
    <location>
        <begin position="4"/>
        <end position="99"/>
    </location>
</feature>
<feature type="binding site" evidence="1">
    <location>
        <position position="42"/>
    </location>
    <ligand>
        <name>[2Fe-2S] cluster</name>
        <dbReference type="ChEBI" id="CHEBI:190135"/>
    </ligand>
</feature>
<feature type="binding site" evidence="1">
    <location>
        <position position="44"/>
    </location>
    <ligand>
        <name>[2Fe-2S] cluster</name>
        <dbReference type="ChEBI" id="CHEBI:190135"/>
    </ligand>
</feature>
<feature type="binding site" evidence="1">
    <location>
        <position position="62"/>
    </location>
    <ligand>
        <name>[2Fe-2S] cluster</name>
        <dbReference type="ChEBI" id="CHEBI:190135"/>
    </ligand>
</feature>
<feature type="binding site" evidence="1">
    <location>
        <position position="65"/>
    </location>
    <ligand>
        <name>[2Fe-2S] cluster</name>
        <dbReference type="ChEBI" id="CHEBI:190135"/>
    </ligand>
</feature>
<organism>
    <name type="scientific">Escherichia coli (strain K12)</name>
    <dbReference type="NCBI Taxonomy" id="83333"/>
    <lineage>
        <taxon>Bacteria</taxon>
        <taxon>Pseudomonadati</taxon>
        <taxon>Pseudomonadota</taxon>
        <taxon>Gammaproteobacteria</taxon>
        <taxon>Enterobacterales</taxon>
        <taxon>Enterobacteriaceae</taxon>
        <taxon>Escherichia</taxon>
    </lineage>
</organism>
<protein>
    <recommendedName>
        <fullName>3-phenylpropionate/cinnamic acid dioxygenase ferredoxin subunit</fullName>
    </recommendedName>
</protein>